<evidence type="ECO:0000255" key="1">
    <source>
        <dbReference type="HAMAP-Rule" id="MF_00195"/>
    </source>
</evidence>
<feature type="chain" id="PRO_1000124349" description="GTPase Der">
    <location>
        <begin position="1"/>
        <end position="449"/>
    </location>
</feature>
<feature type="domain" description="EngA-type G 1">
    <location>
        <begin position="4"/>
        <end position="174"/>
    </location>
</feature>
<feature type="domain" description="EngA-type G 2">
    <location>
        <begin position="183"/>
        <end position="358"/>
    </location>
</feature>
<feature type="domain" description="KH-like" evidence="1">
    <location>
        <begin position="359"/>
        <end position="444"/>
    </location>
</feature>
<feature type="binding site" evidence="1">
    <location>
        <begin position="10"/>
        <end position="17"/>
    </location>
    <ligand>
        <name>GTP</name>
        <dbReference type="ChEBI" id="CHEBI:37565"/>
        <label>1</label>
    </ligand>
</feature>
<feature type="binding site" evidence="1">
    <location>
        <begin position="57"/>
        <end position="61"/>
    </location>
    <ligand>
        <name>GTP</name>
        <dbReference type="ChEBI" id="CHEBI:37565"/>
        <label>1</label>
    </ligand>
</feature>
<feature type="binding site" evidence="1">
    <location>
        <begin position="126"/>
        <end position="129"/>
    </location>
    <ligand>
        <name>GTP</name>
        <dbReference type="ChEBI" id="CHEBI:37565"/>
        <label>1</label>
    </ligand>
</feature>
<feature type="binding site" evidence="1">
    <location>
        <begin position="189"/>
        <end position="196"/>
    </location>
    <ligand>
        <name>GTP</name>
        <dbReference type="ChEBI" id="CHEBI:37565"/>
        <label>2</label>
    </ligand>
</feature>
<feature type="binding site" evidence="1">
    <location>
        <begin position="236"/>
        <end position="240"/>
    </location>
    <ligand>
        <name>GTP</name>
        <dbReference type="ChEBI" id="CHEBI:37565"/>
        <label>2</label>
    </ligand>
</feature>
<feature type="binding site" evidence="1">
    <location>
        <begin position="301"/>
        <end position="304"/>
    </location>
    <ligand>
        <name>GTP</name>
        <dbReference type="ChEBI" id="CHEBI:37565"/>
        <label>2</label>
    </ligand>
</feature>
<comment type="function">
    <text evidence="1">GTPase that plays an essential role in the late steps of ribosome biogenesis.</text>
</comment>
<comment type="subunit">
    <text evidence="1">Associates with the 50S ribosomal subunit.</text>
</comment>
<comment type="similarity">
    <text evidence="1">Belongs to the TRAFAC class TrmE-Era-EngA-EngB-Septin-like GTPase superfamily. EngA (Der) GTPase family.</text>
</comment>
<accession>B9LBT6</accession>
<name>DER_CHLSY</name>
<sequence>MTKPIVAIVGRPNVGKSTFFNRLIGERRAIVEDLPGTTRDRLYGDTFWNGREFTVVDTAGVLFGGEDPNLPEAEIARRTRAQAEHAIAEADAIIFIVDGRDGLTAADSDVADVLRTTSKPVVLAVNKCDSQERMLDAVEFYALNLGEPIPMSAFHGLGTGDVLDRLTEYLPPKTFTQEEERHLRIAIVGRPNVGKSSLLNRLLGQERSVVSSIPGTTRDPIDTTITYHGEPITLIDTAGIRRAGKIERGIEKYSVLRTLRAIERCDVALLLIDATEGVTAQDTHIAGMVVEAKKGLILVVNKWDAIEKDSHTYYAFQDQVREAFKFVDYAPIVFVSALTGQRVSHLLDYAREVYVQRQKRVPTSELNNFLREVMLQQPPMAVKKGAHLRLYYAVQPQTEPPVFLFFANDGELVHWSYARYLENRLRERYGFQGTPIVIVFRSRERKEER</sequence>
<dbReference type="EMBL" id="CP001364">
    <property type="protein sequence ID" value="ACM54731.1"/>
    <property type="molecule type" value="Genomic_DNA"/>
</dbReference>
<dbReference type="SMR" id="B9LBT6"/>
<dbReference type="KEGG" id="chl:Chy400_3354"/>
<dbReference type="HOGENOM" id="CLU_016077_6_2_0"/>
<dbReference type="OrthoDB" id="9805918at2"/>
<dbReference type="GO" id="GO:0016887">
    <property type="term" value="F:ATP hydrolysis activity"/>
    <property type="evidence" value="ECO:0007669"/>
    <property type="project" value="InterPro"/>
</dbReference>
<dbReference type="GO" id="GO:0005525">
    <property type="term" value="F:GTP binding"/>
    <property type="evidence" value="ECO:0007669"/>
    <property type="project" value="UniProtKB-UniRule"/>
</dbReference>
<dbReference type="GO" id="GO:0043022">
    <property type="term" value="F:ribosome binding"/>
    <property type="evidence" value="ECO:0007669"/>
    <property type="project" value="TreeGrafter"/>
</dbReference>
<dbReference type="GO" id="GO:0042254">
    <property type="term" value="P:ribosome biogenesis"/>
    <property type="evidence" value="ECO:0007669"/>
    <property type="project" value="UniProtKB-KW"/>
</dbReference>
<dbReference type="CDD" id="cd01894">
    <property type="entry name" value="EngA1"/>
    <property type="match status" value="1"/>
</dbReference>
<dbReference type="CDD" id="cd01895">
    <property type="entry name" value="EngA2"/>
    <property type="match status" value="1"/>
</dbReference>
<dbReference type="FunFam" id="3.30.300.20:FF:000004">
    <property type="entry name" value="GTPase Der"/>
    <property type="match status" value="1"/>
</dbReference>
<dbReference type="FunFam" id="3.40.50.300:FF:000040">
    <property type="entry name" value="GTPase Der"/>
    <property type="match status" value="1"/>
</dbReference>
<dbReference type="FunFam" id="3.40.50.300:FF:000057">
    <property type="entry name" value="GTPase Der"/>
    <property type="match status" value="1"/>
</dbReference>
<dbReference type="Gene3D" id="3.30.300.20">
    <property type="match status" value="1"/>
</dbReference>
<dbReference type="Gene3D" id="3.40.50.300">
    <property type="entry name" value="P-loop containing nucleotide triphosphate hydrolases"/>
    <property type="match status" value="2"/>
</dbReference>
<dbReference type="HAMAP" id="MF_00195">
    <property type="entry name" value="GTPase_Der"/>
    <property type="match status" value="1"/>
</dbReference>
<dbReference type="InterPro" id="IPR003593">
    <property type="entry name" value="AAA+_ATPase"/>
</dbReference>
<dbReference type="InterPro" id="IPR031166">
    <property type="entry name" value="G_ENGA"/>
</dbReference>
<dbReference type="InterPro" id="IPR006073">
    <property type="entry name" value="GTP-bd"/>
</dbReference>
<dbReference type="InterPro" id="IPR016484">
    <property type="entry name" value="GTPase_Der"/>
</dbReference>
<dbReference type="InterPro" id="IPR032859">
    <property type="entry name" value="KH_dom-like"/>
</dbReference>
<dbReference type="InterPro" id="IPR015946">
    <property type="entry name" value="KH_dom-like_a/b"/>
</dbReference>
<dbReference type="InterPro" id="IPR027417">
    <property type="entry name" value="P-loop_NTPase"/>
</dbReference>
<dbReference type="InterPro" id="IPR005225">
    <property type="entry name" value="Small_GTP-bd"/>
</dbReference>
<dbReference type="NCBIfam" id="TIGR03594">
    <property type="entry name" value="GTPase_EngA"/>
    <property type="match status" value="1"/>
</dbReference>
<dbReference type="NCBIfam" id="TIGR00231">
    <property type="entry name" value="small_GTP"/>
    <property type="match status" value="2"/>
</dbReference>
<dbReference type="PANTHER" id="PTHR43834">
    <property type="entry name" value="GTPASE DER"/>
    <property type="match status" value="1"/>
</dbReference>
<dbReference type="PANTHER" id="PTHR43834:SF6">
    <property type="entry name" value="GTPASE DER"/>
    <property type="match status" value="1"/>
</dbReference>
<dbReference type="Pfam" id="PF14714">
    <property type="entry name" value="KH_dom-like"/>
    <property type="match status" value="1"/>
</dbReference>
<dbReference type="Pfam" id="PF01926">
    <property type="entry name" value="MMR_HSR1"/>
    <property type="match status" value="2"/>
</dbReference>
<dbReference type="PIRSF" id="PIRSF006485">
    <property type="entry name" value="GTP-binding_EngA"/>
    <property type="match status" value="1"/>
</dbReference>
<dbReference type="PRINTS" id="PR00326">
    <property type="entry name" value="GTP1OBG"/>
</dbReference>
<dbReference type="SMART" id="SM00382">
    <property type="entry name" value="AAA"/>
    <property type="match status" value="2"/>
</dbReference>
<dbReference type="SUPFAM" id="SSF52540">
    <property type="entry name" value="P-loop containing nucleoside triphosphate hydrolases"/>
    <property type="match status" value="2"/>
</dbReference>
<dbReference type="PROSITE" id="PS51712">
    <property type="entry name" value="G_ENGA"/>
    <property type="match status" value="2"/>
</dbReference>
<gene>
    <name evidence="1" type="primary">der</name>
    <name type="synonym">engA</name>
    <name type="ordered locus">Chy400_3354</name>
</gene>
<proteinExistence type="inferred from homology"/>
<keyword id="KW-0342">GTP-binding</keyword>
<keyword id="KW-0547">Nucleotide-binding</keyword>
<keyword id="KW-0677">Repeat</keyword>
<keyword id="KW-0690">Ribosome biogenesis</keyword>
<protein>
    <recommendedName>
        <fullName evidence="1">GTPase Der</fullName>
    </recommendedName>
    <alternativeName>
        <fullName evidence="1">GTP-binding protein EngA</fullName>
    </alternativeName>
</protein>
<organism>
    <name type="scientific">Chloroflexus aurantiacus (strain ATCC 29364 / DSM 637 / Y-400-fl)</name>
    <dbReference type="NCBI Taxonomy" id="480224"/>
    <lineage>
        <taxon>Bacteria</taxon>
        <taxon>Bacillati</taxon>
        <taxon>Chloroflexota</taxon>
        <taxon>Chloroflexia</taxon>
        <taxon>Chloroflexales</taxon>
        <taxon>Chloroflexineae</taxon>
        <taxon>Chloroflexaceae</taxon>
        <taxon>Chloroflexus</taxon>
    </lineage>
</organism>
<reference key="1">
    <citation type="submission" date="2009-01" db="EMBL/GenBank/DDBJ databases">
        <title>Complete sequence of Chloroflexus sp. Y-400-fl.</title>
        <authorList>
            <consortium name="US DOE Joint Genome Institute"/>
            <person name="Lucas S."/>
            <person name="Copeland A."/>
            <person name="Lapidus A."/>
            <person name="Glavina del Rio T."/>
            <person name="Dalin E."/>
            <person name="Tice H."/>
            <person name="Bruce D."/>
            <person name="Goodwin L."/>
            <person name="Pitluck S."/>
            <person name="Sims D."/>
            <person name="Kiss H."/>
            <person name="Brettin T."/>
            <person name="Detter J.C."/>
            <person name="Han C."/>
            <person name="Larimer F."/>
            <person name="Land M."/>
            <person name="Hauser L."/>
            <person name="Kyrpides N."/>
            <person name="Ovchinnikova G."/>
            <person name="Bryant D.A."/>
            <person name="Richardson P."/>
        </authorList>
    </citation>
    <scope>NUCLEOTIDE SEQUENCE [LARGE SCALE GENOMIC DNA]</scope>
    <source>
        <strain>ATCC 29364 / DSM 637 / Y-400-fl</strain>
    </source>
</reference>